<reference key="1">
    <citation type="journal article" date="1993" name="Hum. Mol. Genet.">
        <title>Non-conservation of a catalytic residue in a dipeptidyl aminopeptidase IV-related protein encoded by a gene on human chromosome 7.</title>
        <authorList>
            <person name="Yokotani N."/>
            <person name="Doi K."/>
            <person name="Wenthold R.J."/>
            <person name="Wada K."/>
        </authorList>
    </citation>
    <scope>NUCLEOTIDE SEQUENCE [MRNA] (ISOFORMS DPPX-L AND DPPX-S)</scope>
    <scope>VARIANT PRO-854</scope>
    <scope>LACK OF CATALYTIC ACTIVITY</scope>
    <source>
        <tissue>Hippocampus</tissue>
    </source>
</reference>
<reference key="2">
    <citation type="journal article" date="2003" name="Nature">
        <title>The DNA sequence of human chromosome 7.</title>
        <authorList>
            <person name="Hillier L.W."/>
            <person name="Fulton R.S."/>
            <person name="Fulton L.A."/>
            <person name="Graves T.A."/>
            <person name="Pepin K.H."/>
            <person name="Wagner-McPherson C."/>
            <person name="Layman D."/>
            <person name="Maas J."/>
            <person name="Jaeger S."/>
            <person name="Walker R."/>
            <person name="Wylie K."/>
            <person name="Sekhon M."/>
            <person name="Becker M.C."/>
            <person name="O'Laughlin M.D."/>
            <person name="Schaller M.E."/>
            <person name="Fewell G.A."/>
            <person name="Delehaunty K.D."/>
            <person name="Miner T.L."/>
            <person name="Nash W.E."/>
            <person name="Cordes M."/>
            <person name="Du H."/>
            <person name="Sun H."/>
            <person name="Edwards J."/>
            <person name="Bradshaw-Cordum H."/>
            <person name="Ali J."/>
            <person name="Andrews S."/>
            <person name="Isak A."/>
            <person name="Vanbrunt A."/>
            <person name="Nguyen C."/>
            <person name="Du F."/>
            <person name="Lamar B."/>
            <person name="Courtney L."/>
            <person name="Kalicki J."/>
            <person name="Ozersky P."/>
            <person name="Bielicki L."/>
            <person name="Scott K."/>
            <person name="Holmes A."/>
            <person name="Harkins R."/>
            <person name="Harris A."/>
            <person name="Strong C.M."/>
            <person name="Hou S."/>
            <person name="Tomlinson C."/>
            <person name="Dauphin-Kohlberg S."/>
            <person name="Kozlowicz-Reilly A."/>
            <person name="Leonard S."/>
            <person name="Rohlfing T."/>
            <person name="Rock S.M."/>
            <person name="Tin-Wollam A.-M."/>
            <person name="Abbott A."/>
            <person name="Minx P."/>
            <person name="Maupin R."/>
            <person name="Strowmatt C."/>
            <person name="Latreille P."/>
            <person name="Miller N."/>
            <person name="Johnson D."/>
            <person name="Murray J."/>
            <person name="Woessner J.P."/>
            <person name="Wendl M.C."/>
            <person name="Yang S.-P."/>
            <person name="Schultz B.R."/>
            <person name="Wallis J.W."/>
            <person name="Spieth J."/>
            <person name="Bieri T.A."/>
            <person name="Nelson J.O."/>
            <person name="Berkowicz N."/>
            <person name="Wohldmann P.E."/>
            <person name="Cook L.L."/>
            <person name="Hickenbotham M.T."/>
            <person name="Eldred J."/>
            <person name="Williams D."/>
            <person name="Bedell J.A."/>
            <person name="Mardis E.R."/>
            <person name="Clifton S.W."/>
            <person name="Chissoe S.L."/>
            <person name="Marra M.A."/>
            <person name="Raymond C."/>
            <person name="Haugen E."/>
            <person name="Gillett W."/>
            <person name="Zhou Y."/>
            <person name="James R."/>
            <person name="Phelps K."/>
            <person name="Iadanoto S."/>
            <person name="Bubb K."/>
            <person name="Simms E."/>
            <person name="Levy R."/>
            <person name="Clendenning J."/>
            <person name="Kaul R."/>
            <person name="Kent W.J."/>
            <person name="Furey T.S."/>
            <person name="Baertsch R.A."/>
            <person name="Brent M.R."/>
            <person name="Keibler E."/>
            <person name="Flicek P."/>
            <person name="Bork P."/>
            <person name="Suyama M."/>
            <person name="Bailey J.A."/>
            <person name="Portnoy M.E."/>
            <person name="Torrents D."/>
            <person name="Chinwalla A.T."/>
            <person name="Gish W.R."/>
            <person name="Eddy S.R."/>
            <person name="McPherson J.D."/>
            <person name="Olson M.V."/>
            <person name="Eichler E.E."/>
            <person name="Green E.D."/>
            <person name="Waterston R.H."/>
            <person name="Wilson R.K."/>
        </authorList>
    </citation>
    <scope>NUCLEOTIDE SEQUENCE [LARGE SCALE GENOMIC DNA]</scope>
</reference>
<reference key="3">
    <citation type="journal article" date="2004" name="Biophys. J.">
        <title>Modulation of Kv4.2 channel expression and gating by dipeptidyl peptidase 10 (DPP10).</title>
        <authorList>
            <person name="Jerng H.H."/>
            <person name="Qian Y."/>
            <person name="Pfaffinger P.J."/>
        </authorList>
    </citation>
    <scope>INTERACTION WITH KCND2</scope>
    <scope>GLYCOSYLATION</scope>
    <scope>FUNCTION</scope>
</reference>
<reference key="4">
    <citation type="journal article" date="2008" name="J. Biol. Chem.">
        <title>I SA channel complexes include four subunits each of DPP6 and Kv4.2.</title>
        <authorList>
            <person name="Soh H."/>
            <person name="Goldstein S.A."/>
        </authorList>
    </citation>
    <scope>INTERACTION WITH KCND2</scope>
    <scope>SUBUNIT</scope>
    <scope>IDENTIFICATION IN A COMPLEX WITH KCND2 AND KCNIP2</scope>
    <scope>FUNCTION</scope>
    <scope>SUBCELLULAR LOCATION</scope>
</reference>
<reference key="5">
    <citation type="journal article" date="2008" name="Nat. Genet.">
        <title>Genetic variation in DPP6 is associated with susceptibility to amyotrophic lateral sclerosis.</title>
        <authorList>
            <person name="van Es M.A."/>
            <person name="van Vught P.W.J."/>
            <person name="Blauw H.M."/>
            <person name="Franke L."/>
            <person name="Saris C.G.J."/>
            <person name="Van den Bosch L."/>
            <person name="de Jong S.W."/>
            <person name="de Jong V."/>
            <person name="Baas F."/>
            <person name="van't Slot R."/>
            <person name="Lemmens R."/>
            <person name="Schelhaas H.J."/>
            <person name="Birve A."/>
            <person name="Sleegers K."/>
            <person name="Van Broeckhoven C."/>
            <person name="Schymick J.C."/>
            <person name="Traynor B.J."/>
            <person name="Wokke J.H.J."/>
            <person name="Wijmenga C."/>
            <person name="Robberecht W."/>
            <person name="Andersen P.M."/>
            <person name="Veldink J.H."/>
            <person name="Ophoff R.A."/>
            <person name="van den Berg L.H."/>
        </authorList>
    </citation>
    <scope>INVOLVEMENT IN SUSCEPTIBILITY TO ALS</scope>
</reference>
<reference key="6">
    <citation type="journal article" date="2008" name="Science">
        <title>Genetics. The elusive ALS genes.</title>
        <authorList>
            <person name="Garber K."/>
        </authorList>
    </citation>
    <scope>DISCUSSION OF THE INVOLVEMENT IN SUSCEPTIBILITY TO ALS</scope>
</reference>
<reference key="7">
    <citation type="journal article" date="2009" name="Am. J. Hum. Genet.">
        <title>Haplotype-sharing analysis implicates chromosome 7q36 harboring DPP6 in familial idiopathic ventricular fibrillation.</title>
        <authorList>
            <person name="Alders M."/>
            <person name="Koopmann T.T."/>
            <person name="Christiaans I."/>
            <person name="Postema P.G."/>
            <person name="Beekman L."/>
            <person name="Tanck M.W."/>
            <person name="Zeppenfeld K."/>
            <person name="Loh P."/>
            <person name="Koch K.T."/>
            <person name="Demolombe S."/>
            <person name="Mannens M.M."/>
            <person name="Bezzina C.R."/>
            <person name="Wilde A.A."/>
        </authorList>
    </citation>
    <scope>INVOLVEMENT IN VF2</scope>
</reference>
<reference key="8">
    <citation type="journal article" date="2009" name="Biochemistry">
        <title>Convergent modulation of Kv4.2 channel alpha subunits by structurally distinct DPPX and KChIP auxiliary subunits.</title>
        <authorList>
            <person name="Seikel E."/>
            <person name="Trimmer J.S."/>
        </authorList>
    </citation>
    <scope>FUNCTION</scope>
    <scope>SUBCELLULAR LOCATION</scope>
</reference>
<reference key="9">
    <citation type="journal article" date="2013" name="Eur. J. Med. Genet.">
        <title>Loss-of-function variation in the DPP6 gene is associated with autosomal dominant microcephaly and mental retardation.</title>
        <authorList>
            <person name="Liao C."/>
            <person name="Fu F."/>
            <person name="Li R."/>
            <person name="Yang W.Q."/>
            <person name="Liao H.Y."/>
            <person name="Yan J.R."/>
            <person name="Li J."/>
            <person name="Li S.Y."/>
            <person name="Yang X."/>
            <person name="Li D.Z."/>
        </authorList>
    </citation>
    <scope>INVOLVEMENT IN MRD33</scope>
    <scope>VARIANT MRD33 LEU-385</scope>
</reference>
<reference key="10">
    <citation type="journal article" date="2004" name="J. Mol. Biol.">
        <title>Structure of a human A-type potassium channel interacting protein DPPX, a member of the dipeptidyl aminopeptidase family.</title>
        <authorList>
            <person name="Strop P."/>
            <person name="Bankovich A.J."/>
            <person name="Hansen K.C."/>
            <person name="Garcia K.C."/>
            <person name="Brunger A.T."/>
        </authorList>
    </citation>
    <scope>X-RAY CRYSTALLOGRAPHY (3.0 ANGSTROMS) OF 127-849</scope>
    <scope>FUNCTION</scope>
    <scope>DISULFIDE BONDS</scope>
    <scope>GLYCOSYLATION AT ASN-173; ASN-319; ASN-404; ASN-535; ASN-566 AND ASN-813</scope>
</reference>
<feature type="chain" id="PRO_0000122409" description="A-type potassium channel modulatory protein DPP6">
    <location>
        <begin position="1"/>
        <end position="865"/>
    </location>
</feature>
<feature type="topological domain" description="Cytoplasmic" evidence="2">
    <location>
        <begin position="1"/>
        <end position="95"/>
    </location>
</feature>
<feature type="transmembrane region" description="Helical; Signal-anchor for type II membrane protein" evidence="2">
    <location>
        <begin position="96"/>
        <end position="116"/>
    </location>
</feature>
<feature type="topological domain" description="Extracellular" evidence="2">
    <location>
        <begin position="117"/>
        <end position="865"/>
    </location>
</feature>
<feature type="region of interest" description="Disordered" evidence="3">
    <location>
        <begin position="1"/>
        <end position="88"/>
    </location>
</feature>
<feature type="glycosylation site" description="N-linked (GlcNAc...) asparagine" evidence="5">
    <location>
        <position position="173"/>
    </location>
</feature>
<feature type="glycosylation site" description="N-linked (GlcNAc...) asparagine" evidence="5">
    <location>
        <position position="319"/>
    </location>
</feature>
<feature type="glycosylation site" description="N-linked (GlcNAc...) asparagine" evidence="5">
    <location>
        <position position="404"/>
    </location>
</feature>
<feature type="glycosylation site" description="N-linked (GlcNAc...) asparagine" evidence="2">
    <location>
        <position position="471"/>
    </location>
</feature>
<feature type="glycosylation site" description="N-linked (GlcNAc...) asparagine" evidence="5">
    <location>
        <position position="535"/>
    </location>
</feature>
<feature type="glycosylation site" description="N-linked (GlcNAc...) asparagine" evidence="5">
    <location>
        <position position="566"/>
    </location>
</feature>
<feature type="glycosylation site" description="N-linked (GlcNAc...) asparagine" evidence="5">
    <location>
        <position position="813"/>
    </location>
</feature>
<feature type="disulfide bond" evidence="5">
    <location>
        <begin position="411"/>
        <end position="418"/>
    </location>
</feature>
<feature type="disulfide bond" evidence="5">
    <location>
        <begin position="527"/>
        <end position="530"/>
    </location>
</feature>
<feature type="disulfide bond" evidence="5">
    <location>
        <begin position="536"/>
        <end position="554"/>
    </location>
</feature>
<feature type="disulfide bond" evidence="5">
    <location>
        <begin position="735"/>
        <end position="846"/>
    </location>
</feature>
<feature type="splice variant" id="VSP_005365" description="In isoform DPPX-S." evidence="11">
    <original>MASLYQRFTGKINTSRSFPAPPEASHLLGGQGPEEDGGAGAKPLGPRAQAAAPRERGGGGGGAGGRPRFQYQARSDGDEED</original>
    <variation>MTTAKEPSASGKSVQQQEQ</variation>
    <location>
        <begin position="1"/>
        <end position="81"/>
    </location>
</feature>
<feature type="sequence variant" id="VAR_073680" description="In MRD33; dbSNP:rs786205143." evidence="9">
    <original>M</original>
    <variation>L</variation>
    <location>
        <position position="385"/>
    </location>
</feature>
<feature type="sequence variant" id="VAR_051579" description="In dbSNP:rs3734960." evidence="10">
    <original>L</original>
    <variation>P</variation>
    <location>
        <position position="854"/>
    </location>
</feature>
<feature type="sequence conflict" description="In Ref. 1; AAA35760." evidence="12" ref="1">
    <original>A</original>
    <variation>G</variation>
    <location>
        <position position="73"/>
    </location>
</feature>
<feature type="sequence conflict" description="In Ref. 1; AAA35760/AAA35761." evidence="12" ref="1">
    <original>V</original>
    <variation>E</variation>
    <location>
        <position position="520"/>
    </location>
</feature>
<feature type="helix" evidence="16">
    <location>
        <begin position="96"/>
        <end position="116"/>
    </location>
</feature>
<feature type="helix" evidence="15">
    <location>
        <begin position="133"/>
        <end position="136"/>
    </location>
</feature>
<feature type="turn" evidence="15">
    <location>
        <begin position="139"/>
        <end position="141"/>
    </location>
</feature>
<feature type="strand" evidence="15">
    <location>
        <begin position="150"/>
        <end position="154"/>
    </location>
</feature>
<feature type="strand" evidence="15">
    <location>
        <begin position="161"/>
        <end position="163"/>
    </location>
</feature>
<feature type="strand" evidence="15">
    <location>
        <begin position="165"/>
        <end position="168"/>
    </location>
</feature>
<feature type="helix" evidence="15">
    <location>
        <begin position="170"/>
        <end position="172"/>
    </location>
</feature>
<feature type="strand" evidence="15">
    <location>
        <begin position="176"/>
        <end position="179"/>
    </location>
</feature>
<feature type="turn" evidence="15">
    <location>
        <begin position="181"/>
        <end position="188"/>
    </location>
</feature>
<feature type="strand" evidence="15">
    <location>
        <begin position="190"/>
        <end position="194"/>
    </location>
</feature>
<feature type="strand" evidence="15">
    <location>
        <begin position="198"/>
        <end position="206"/>
    </location>
</feature>
<feature type="strand" evidence="15">
    <location>
        <begin position="211"/>
        <end position="213"/>
    </location>
</feature>
<feature type="strand" evidence="15">
    <location>
        <begin position="217"/>
        <end position="226"/>
    </location>
</feature>
<feature type="strand" evidence="15">
    <location>
        <begin position="254"/>
        <end position="258"/>
    </location>
</feature>
<feature type="strand" evidence="15">
    <location>
        <begin position="261"/>
        <end position="270"/>
    </location>
</feature>
<feature type="strand" evidence="15">
    <location>
        <begin position="273"/>
        <end position="276"/>
    </location>
</feature>
<feature type="turn" evidence="15">
    <location>
        <begin position="281"/>
        <end position="283"/>
    </location>
</feature>
<feature type="strand" evidence="15">
    <location>
        <begin position="284"/>
        <end position="288"/>
    </location>
</feature>
<feature type="helix" evidence="15">
    <location>
        <begin position="291"/>
        <end position="295"/>
    </location>
</feature>
<feature type="strand" evidence="15">
    <location>
        <begin position="298"/>
        <end position="306"/>
    </location>
</feature>
<feature type="strand" evidence="15">
    <location>
        <begin position="310"/>
        <end position="319"/>
    </location>
</feature>
<feature type="strand" evidence="15">
    <location>
        <begin position="325"/>
        <end position="328"/>
    </location>
</feature>
<feature type="strand" evidence="15">
    <location>
        <begin position="332"/>
        <end position="336"/>
    </location>
</feature>
<feature type="strand" evidence="15">
    <location>
        <begin position="340"/>
        <end position="343"/>
    </location>
</feature>
<feature type="strand" evidence="15">
    <location>
        <begin position="353"/>
        <end position="364"/>
    </location>
</feature>
<feature type="helix" evidence="15">
    <location>
        <begin position="376"/>
        <end position="378"/>
    </location>
</feature>
<feature type="strand" evidence="15">
    <location>
        <begin position="379"/>
        <end position="400"/>
    </location>
</feature>
<feature type="strand" evidence="15">
    <location>
        <begin position="405"/>
        <end position="412"/>
    </location>
</feature>
<feature type="turn" evidence="15">
    <location>
        <begin position="413"/>
        <end position="415"/>
    </location>
</feature>
<feature type="strand" evidence="15">
    <location>
        <begin position="418"/>
        <end position="425"/>
    </location>
</feature>
<feature type="strand" evidence="15">
    <location>
        <begin position="445"/>
        <end position="452"/>
    </location>
</feature>
<feature type="strand" evidence="15">
    <location>
        <begin position="455"/>
        <end position="458"/>
    </location>
</feature>
<feature type="strand" evidence="15">
    <location>
        <begin position="460"/>
        <end position="466"/>
    </location>
</feature>
<feature type="strand" evidence="15">
    <location>
        <begin position="472"/>
        <end position="474"/>
    </location>
</feature>
<feature type="strand" evidence="15">
    <location>
        <begin position="483"/>
        <end position="485"/>
    </location>
</feature>
<feature type="strand" evidence="15">
    <location>
        <begin position="487"/>
        <end position="494"/>
    </location>
</feature>
<feature type="turn" evidence="15">
    <location>
        <begin position="495"/>
        <end position="498"/>
    </location>
</feature>
<feature type="strand" evidence="15">
    <location>
        <begin position="499"/>
        <end position="507"/>
    </location>
</feature>
<feature type="strand" evidence="15">
    <location>
        <begin position="513"/>
        <end position="517"/>
    </location>
</feature>
<feature type="strand" evidence="15">
    <location>
        <begin position="532"/>
        <end position="535"/>
    </location>
</feature>
<feature type="strand" evidence="15">
    <location>
        <begin position="540"/>
        <end position="543"/>
    </location>
</feature>
<feature type="strand" evidence="15">
    <location>
        <begin position="547"/>
        <end position="553"/>
    </location>
</feature>
<feature type="strand" evidence="15">
    <location>
        <begin position="556"/>
        <end position="559"/>
    </location>
</feature>
<feature type="strand" evidence="15">
    <location>
        <begin position="562"/>
        <end position="566"/>
    </location>
</feature>
<feature type="turn" evidence="15">
    <location>
        <begin position="567"/>
        <end position="569"/>
    </location>
</feature>
<feature type="strand" evidence="15">
    <location>
        <begin position="572"/>
        <end position="577"/>
    </location>
</feature>
<feature type="helix" evidence="15">
    <location>
        <begin position="580"/>
        <end position="587"/>
    </location>
</feature>
<feature type="strand" evidence="15">
    <location>
        <begin position="599"/>
        <end position="601"/>
    </location>
</feature>
<feature type="strand" evidence="15">
    <location>
        <begin position="604"/>
        <end position="606"/>
    </location>
</feature>
<feature type="strand" evidence="15">
    <location>
        <begin position="609"/>
        <end position="612"/>
    </location>
</feature>
<feature type="strand" evidence="15">
    <location>
        <begin position="618"/>
        <end position="620"/>
    </location>
</feature>
<feature type="strand" evidence="15">
    <location>
        <begin position="622"/>
        <end position="627"/>
    </location>
</feature>
<feature type="helix" evidence="15">
    <location>
        <begin position="645"/>
        <end position="651"/>
    </location>
</feature>
<feature type="strand" evidence="15">
    <location>
        <begin position="656"/>
        <end position="658"/>
    </location>
</feature>
<feature type="strand" evidence="15">
    <location>
        <begin position="666"/>
        <end position="668"/>
    </location>
</feature>
<feature type="helix" evidence="15">
    <location>
        <begin position="669"/>
        <end position="674"/>
    </location>
</feature>
<feature type="turn" evidence="15">
    <location>
        <begin position="675"/>
        <end position="678"/>
    </location>
</feature>
<feature type="turn" evidence="15">
    <location>
        <begin position="680"/>
        <end position="682"/>
    </location>
</feature>
<feature type="helix" evidence="15">
    <location>
        <begin position="683"/>
        <end position="696"/>
    </location>
</feature>
<feature type="strand" evidence="15">
    <location>
        <begin position="697"/>
        <end position="711"/>
    </location>
</feature>
<feature type="helix" evidence="15">
    <location>
        <begin position="713"/>
        <end position="720"/>
    </location>
</feature>
<feature type="strand" evidence="15">
    <location>
        <begin position="725"/>
        <end position="727"/>
    </location>
</feature>
<feature type="strand" evidence="15">
    <location>
        <begin position="734"/>
        <end position="740"/>
    </location>
</feature>
<feature type="strand" evidence="15">
    <location>
        <begin position="747"/>
        <end position="749"/>
    </location>
</feature>
<feature type="helix" evidence="15">
    <location>
        <begin position="750"/>
        <end position="757"/>
    </location>
</feature>
<feature type="turn" evidence="15">
    <location>
        <begin position="767"/>
        <end position="770"/>
    </location>
</feature>
<feature type="helix" evidence="15">
    <location>
        <begin position="773"/>
        <end position="776"/>
    </location>
</feature>
<feature type="strand" evidence="15">
    <location>
        <begin position="783"/>
        <end position="789"/>
    </location>
</feature>
<feature type="strand" evidence="15">
    <location>
        <begin position="793"/>
        <end position="795"/>
    </location>
</feature>
<feature type="helix" evidence="15">
    <location>
        <begin position="797"/>
        <end position="809"/>
    </location>
</feature>
<feature type="strand" evidence="15">
    <location>
        <begin position="815"/>
        <end position="819"/>
    </location>
</feature>
<feature type="helix" evidence="15">
    <location>
        <begin position="829"/>
        <end position="843"/>
    </location>
</feature>
<feature type="turn" evidence="15">
    <location>
        <begin position="844"/>
        <end position="847"/>
    </location>
</feature>
<proteinExistence type="evidence at protein level"/>
<evidence type="ECO:0000250" key="1">
    <source>
        <dbReference type="UniProtKB" id="Q9Z218"/>
    </source>
</evidence>
<evidence type="ECO:0000255" key="2"/>
<evidence type="ECO:0000256" key="3">
    <source>
        <dbReference type="SAM" id="MobiDB-lite"/>
    </source>
</evidence>
<evidence type="ECO:0000269" key="4">
    <source>
    </source>
</evidence>
<evidence type="ECO:0000269" key="5">
    <source>
    </source>
</evidence>
<evidence type="ECO:0000269" key="6">
    <source>
    </source>
</evidence>
<evidence type="ECO:0000269" key="7">
    <source>
    </source>
</evidence>
<evidence type="ECO:0000269" key="8">
    <source>
    </source>
</evidence>
<evidence type="ECO:0000269" key="9">
    <source>
    </source>
</evidence>
<evidence type="ECO:0000269" key="10">
    <source>
    </source>
</evidence>
<evidence type="ECO:0000303" key="11">
    <source>
    </source>
</evidence>
<evidence type="ECO:0000305" key="12"/>
<evidence type="ECO:0000305" key="13">
    <source>
    </source>
</evidence>
<evidence type="ECO:0000312" key="14">
    <source>
        <dbReference type="HGNC" id="HGNC:3010"/>
    </source>
</evidence>
<evidence type="ECO:0007829" key="15">
    <source>
        <dbReference type="PDB" id="1XFD"/>
    </source>
</evidence>
<evidence type="ECO:0007829" key="16">
    <source>
        <dbReference type="PDB" id="7UKG"/>
    </source>
</evidence>
<gene>
    <name evidence="14" type="primary">DPP6</name>
</gene>
<organism>
    <name type="scientific">Homo sapiens</name>
    <name type="common">Human</name>
    <dbReference type="NCBI Taxonomy" id="9606"/>
    <lineage>
        <taxon>Eukaryota</taxon>
        <taxon>Metazoa</taxon>
        <taxon>Chordata</taxon>
        <taxon>Craniata</taxon>
        <taxon>Vertebrata</taxon>
        <taxon>Euteleostomi</taxon>
        <taxon>Mammalia</taxon>
        <taxon>Eutheria</taxon>
        <taxon>Euarchontoglires</taxon>
        <taxon>Primates</taxon>
        <taxon>Haplorrhini</taxon>
        <taxon>Catarrhini</taxon>
        <taxon>Hominidae</taxon>
        <taxon>Homo</taxon>
    </lineage>
</organism>
<protein>
    <recommendedName>
        <fullName evidence="12">A-type potassium channel modulatory protein DPP6</fullName>
    </recommendedName>
    <alternativeName>
        <fullName>DPPX</fullName>
    </alternativeName>
    <alternativeName>
        <fullName>Dipeptidyl aminopeptidase-like protein 6</fullName>
    </alternativeName>
    <alternativeName>
        <fullName>Dipeptidyl aminopeptidase-related protein</fullName>
    </alternativeName>
    <alternativeName>
        <fullName>Dipeptidyl peptidase 6</fullName>
    </alternativeName>
    <alternativeName>
        <fullName>Dipeptidyl peptidase IV-like protein</fullName>
    </alternativeName>
    <alternativeName>
        <fullName>Dipeptidyl peptidase VI</fullName>
        <shortName>DPP VI</shortName>
    </alternativeName>
</protein>
<name>DPP6_HUMAN</name>
<comment type="function">
    <text evidence="4 6 10 13">Promotes cell surface expression of the potassium channel KCND2 (PubMed:15454437, PubMed:19441798). Modulates the activity and gating characteristics of the potassium channel KCND2 (PubMed:18364354). Has no dipeptidyl aminopeptidase activity (PubMed:15476821, PubMed:8103397).</text>
</comment>
<comment type="subunit">
    <text evidence="1 4 5 6 8">Homodimer (in vitro) (PubMed:15476821). Interacts with KCND2 (PubMed:15454437, PubMed:18364354). Identified in a complex with KCND2 and KCNIP2 (PubMed:18364354). Forms an octameric complex composed of four DPP6 subunits bound to the KCND2 tetramer (PubMed:18364354). Interacts with KCND3; this interaction modulates the channel gating kinetics namely channel activation and inactivation kinetics and rate of recovery from inactivation (By similarity).</text>
</comment>
<comment type="subcellular location">
    <subcellularLocation>
        <location evidence="6 8">Cell membrane</location>
        <topology evidence="12">Single-pass type II membrane protein</topology>
    </subcellularLocation>
</comment>
<comment type="alternative products">
    <event type="alternative splicing"/>
    <isoform>
        <id>P42658-1</id>
        <name>DPPX-L</name>
        <sequence type="displayed"/>
    </isoform>
    <isoform>
        <id>P42658-2</id>
        <name>DPPX-S</name>
        <sequence type="described" ref="VSP_005365"/>
    </isoform>
</comment>
<comment type="tissue specificity">
    <text>Expressed predominantly in brain.</text>
</comment>
<comment type="PTM">
    <text evidence="4">N-glycosylated.</text>
</comment>
<comment type="disease" evidence="7">
    <disease id="DI-02563">
        <name>Familial paroxysmal ventricular fibrillation 2</name>
        <acronym>VF2</acronym>
        <description>A cardiac arrhythmia marked by fibrillary contractions of the ventricular muscle due to rapid repetitive excitation of myocardial fibers without coordinated contraction of the ventricle and by absence of atrial activity.</description>
        <dbReference type="MIM" id="612956"/>
    </disease>
    <text>The disease is caused by variants affecting the gene represented in this entry. A genetic variation 340 bases upstream from the ATG start site of the DPP6 gene is the cause of familial paroxysmal ventricular fibrillation type 2.</text>
</comment>
<comment type="disease" evidence="9">
    <disease id="DI-04391">
        <name>Intellectual developmental disorder, autosomal dominant 33</name>
        <acronym>MRD33</acronym>
        <description>A disorder characterized by significantly below average general intellectual functioning associated with impairments in adaptive behavior and manifested during the developmental period. MRD33 patients manifest microcephaly in addition to intellectual disability.</description>
        <dbReference type="MIM" id="616311"/>
    </disease>
    <text>The disease is caused by variants affecting the gene represented in this entry.</text>
</comment>
<comment type="miscellaneous">
    <text>Genetic variation in DPP6 may influence susceptibility to amyotrophic lateral sclerosis (ALS). ALS is a severely disabling and lethal disorder caused by progressive degeneration of motor neurons in the brain, spinal cord and brainstem.</text>
</comment>
<comment type="similarity">
    <text evidence="12">Belongs to the peptidase S9B family.</text>
</comment>
<dbReference type="EMBL" id="M96859">
    <property type="protein sequence ID" value="AAA35760.1"/>
    <property type="molecule type" value="mRNA"/>
</dbReference>
<dbReference type="EMBL" id="M96860">
    <property type="protein sequence ID" value="AAA35761.1"/>
    <property type="molecule type" value="mRNA"/>
</dbReference>
<dbReference type="EMBL" id="AC006019">
    <property type="status" value="NOT_ANNOTATED_CDS"/>
    <property type="molecule type" value="Genomic_DNA"/>
</dbReference>
<dbReference type="EMBL" id="AC024239">
    <property type="status" value="NOT_ANNOTATED_CDS"/>
    <property type="molecule type" value="Genomic_DNA"/>
</dbReference>
<dbReference type="EMBL" id="AC024730">
    <property type="status" value="NOT_ANNOTATED_CDS"/>
    <property type="molecule type" value="Genomic_DNA"/>
</dbReference>
<dbReference type="EMBL" id="AC073336">
    <property type="status" value="NOT_ANNOTATED_CDS"/>
    <property type="molecule type" value="Genomic_DNA"/>
</dbReference>
<dbReference type="CCDS" id="CCDS75683.1">
    <molecule id="P42658-1"/>
</dbReference>
<dbReference type="CCDS" id="CCDS75684.1">
    <molecule id="P42658-2"/>
</dbReference>
<dbReference type="PIR" id="I54331">
    <property type="entry name" value="I54331"/>
</dbReference>
<dbReference type="PIR" id="I68600">
    <property type="entry name" value="I68600"/>
</dbReference>
<dbReference type="RefSeq" id="NP_570629.2">
    <molecule id="P42658-1"/>
    <property type="nucleotide sequence ID" value="NM_130797.4"/>
</dbReference>
<dbReference type="PDB" id="1XFD">
    <property type="method" value="X-ray"/>
    <property type="resolution" value="3.00 A"/>
    <property type="chains" value="A/B/C/D=127-849"/>
</dbReference>
<dbReference type="PDB" id="7E87">
    <property type="method" value="EM"/>
    <property type="resolution" value="3.40 A"/>
    <property type="chains" value="E/F/I/J=93-120"/>
</dbReference>
<dbReference type="PDB" id="7E89">
    <property type="method" value="EM"/>
    <property type="resolution" value="4.00 A"/>
    <property type="chains" value="A/B/I/J=121-849"/>
</dbReference>
<dbReference type="PDB" id="7E8B">
    <property type="method" value="EM"/>
    <property type="resolution" value="4.20 A"/>
    <property type="chains" value="I/J/K/L=93-849"/>
</dbReference>
<dbReference type="PDB" id="7E8E">
    <property type="method" value="EM"/>
    <property type="resolution" value="3.90 A"/>
    <property type="chains" value="I/J/K/L=94-120"/>
</dbReference>
<dbReference type="PDB" id="7E8G">
    <property type="method" value="EM"/>
    <property type="resolution" value="4.50 A"/>
    <property type="chains" value="I/J/K/L=121-849"/>
</dbReference>
<dbReference type="PDB" id="7E8H">
    <property type="method" value="EM"/>
    <property type="resolution" value="4.50 A"/>
    <property type="chains" value="I/J/K/L=94-849"/>
</dbReference>
<dbReference type="PDB" id="7UKG">
    <property type="method" value="EM"/>
    <property type="resolution" value="2.24 A"/>
    <property type="chains" value="I/J/K/L=82-865"/>
</dbReference>
<dbReference type="PDBsum" id="1XFD"/>
<dbReference type="PDBsum" id="7E87"/>
<dbReference type="PDBsum" id="7E89"/>
<dbReference type="PDBsum" id="7E8B"/>
<dbReference type="PDBsum" id="7E8E"/>
<dbReference type="PDBsum" id="7E8G"/>
<dbReference type="PDBsum" id="7E8H"/>
<dbReference type="PDBsum" id="7UKG"/>
<dbReference type="EMDB" id="EMD-31011"/>
<dbReference type="EMDB" id="EMD-31012"/>
<dbReference type="EMDB" id="EMD-31013"/>
<dbReference type="EMDB" id="EMD-31016"/>
<dbReference type="EMDB" id="EMD-31018"/>
<dbReference type="EMDB" id="EMD-31019"/>
<dbReference type="SMR" id="P42658"/>
<dbReference type="BioGRID" id="108138">
    <property type="interactions" value="26"/>
</dbReference>
<dbReference type="FunCoup" id="P42658">
    <property type="interactions" value="396"/>
</dbReference>
<dbReference type="IntAct" id="P42658">
    <property type="interactions" value="14"/>
</dbReference>
<dbReference type="STRING" id="9606.ENSP00000367001"/>
<dbReference type="ESTHER" id="human-DPP6">
    <property type="family name" value="DPP4N_Peptidase_S9"/>
</dbReference>
<dbReference type="MEROPS" id="S09.973"/>
<dbReference type="TCDB" id="8.A.51.1.1">
    <property type="family name" value="the dipeptidyl-aminopeptidase-like protein 6 beta subunit of kv4 channels (dpp6) family"/>
</dbReference>
<dbReference type="GlyCosmos" id="P42658">
    <property type="glycosylation" value="8 sites, 1 glycan"/>
</dbReference>
<dbReference type="GlyGen" id="P42658">
    <property type="glycosylation" value="8 sites, 5 N-linked glycans (1 site), 1 O-linked glycan (1 site)"/>
</dbReference>
<dbReference type="iPTMnet" id="P42658"/>
<dbReference type="PhosphoSitePlus" id="P42658"/>
<dbReference type="SwissPalm" id="P42658"/>
<dbReference type="BioMuta" id="DPP6"/>
<dbReference type="DMDM" id="218512016"/>
<dbReference type="MassIVE" id="P42658"/>
<dbReference type="PaxDb" id="9606-ENSP00000367001"/>
<dbReference type="PeptideAtlas" id="P42658"/>
<dbReference type="ProteomicsDB" id="55521">
    <molecule id="P42658-1"/>
</dbReference>
<dbReference type="ProteomicsDB" id="55522">
    <molecule id="P42658-2"/>
</dbReference>
<dbReference type="ABCD" id="P42658">
    <property type="antibodies" value="5 sequenced antibodies"/>
</dbReference>
<dbReference type="Antibodypedia" id="33071">
    <property type="antibodies" value="234 antibodies from 27 providers"/>
</dbReference>
<dbReference type="DNASU" id="1804"/>
<dbReference type="Ensembl" id="ENST00000332007.7">
    <molecule id="P42658-2"/>
    <property type="protein sequence ID" value="ENSP00000328226.3"/>
    <property type="gene ID" value="ENSG00000130226.18"/>
</dbReference>
<dbReference type="Ensembl" id="ENST00000377770.8">
    <molecule id="P42658-1"/>
    <property type="protein sequence ID" value="ENSP00000367001.3"/>
    <property type="gene ID" value="ENSG00000130226.18"/>
</dbReference>
<dbReference type="GeneID" id="1804"/>
<dbReference type="KEGG" id="hsa:1804"/>
<dbReference type="MANE-Select" id="ENST00000377770.8">
    <property type="protein sequence ID" value="ENSP00000367001.3"/>
    <property type="RefSeq nucleotide sequence ID" value="NM_130797.4"/>
    <property type="RefSeq protein sequence ID" value="NP_570629.2"/>
</dbReference>
<dbReference type="UCSC" id="uc003wlk.4">
    <molecule id="P42658-1"/>
    <property type="organism name" value="human"/>
</dbReference>
<dbReference type="AGR" id="HGNC:3010"/>
<dbReference type="CTD" id="1804"/>
<dbReference type="DisGeNET" id="1804"/>
<dbReference type="GeneCards" id="DPP6"/>
<dbReference type="HGNC" id="HGNC:3010">
    <property type="gene designation" value="DPP6"/>
</dbReference>
<dbReference type="HPA" id="ENSG00000130226">
    <property type="expression patterns" value="Tissue enhanced (brain, endometrium)"/>
</dbReference>
<dbReference type="MalaCards" id="DPP6"/>
<dbReference type="MIM" id="126141">
    <property type="type" value="gene"/>
</dbReference>
<dbReference type="MIM" id="612956">
    <property type="type" value="phenotype"/>
</dbReference>
<dbReference type="MIM" id="616311">
    <property type="type" value="phenotype"/>
</dbReference>
<dbReference type="neXtProt" id="NX_P42658"/>
<dbReference type="OpenTargets" id="ENSG00000130226"/>
<dbReference type="Orphanet" id="2514">
    <property type="disease" value="Autosomal dominant primary microcephaly"/>
</dbReference>
<dbReference type="Orphanet" id="228140">
    <property type="disease" value="Idiopathic ventricular fibrillation, non Brugada type"/>
</dbReference>
<dbReference type="PharmGKB" id="PA27468"/>
<dbReference type="VEuPathDB" id="HostDB:ENSG00000130226"/>
<dbReference type="eggNOG" id="KOG2100">
    <property type="taxonomic scope" value="Eukaryota"/>
</dbReference>
<dbReference type="GeneTree" id="ENSGT00940000156280"/>
<dbReference type="InParanoid" id="P42658"/>
<dbReference type="OMA" id="GERYMDT"/>
<dbReference type="OrthoDB" id="16520at2759"/>
<dbReference type="PAN-GO" id="P42658">
    <property type="GO annotations" value="2 GO annotations based on evolutionary models"/>
</dbReference>
<dbReference type="PhylomeDB" id="P42658"/>
<dbReference type="TreeFam" id="TF313309"/>
<dbReference type="PathwayCommons" id="P42658"/>
<dbReference type="SignaLink" id="P42658"/>
<dbReference type="SIGNOR" id="P42658"/>
<dbReference type="BioGRID-ORCS" id="1804">
    <property type="hits" value="13 hits in 392 CRISPR screens"/>
</dbReference>
<dbReference type="CD-CODE" id="FB4E32DD">
    <property type="entry name" value="Presynaptic clusters and postsynaptic densities"/>
</dbReference>
<dbReference type="ChiTaRS" id="DPP6">
    <property type="organism name" value="human"/>
</dbReference>
<dbReference type="EvolutionaryTrace" id="P42658"/>
<dbReference type="GeneWiki" id="DPP6"/>
<dbReference type="GenomeRNAi" id="1804"/>
<dbReference type="Pharos" id="P42658">
    <property type="development level" value="Tbio"/>
</dbReference>
<dbReference type="PRO" id="PR:P42658"/>
<dbReference type="Proteomes" id="UP000005640">
    <property type="component" value="Chromosome 7"/>
</dbReference>
<dbReference type="RNAct" id="P42658">
    <property type="molecule type" value="protein"/>
</dbReference>
<dbReference type="Bgee" id="ENSG00000130226">
    <property type="expression patterns" value="Expressed in middle temporal gyrus and 162 other cell types or tissues"/>
</dbReference>
<dbReference type="ExpressionAtlas" id="P42658">
    <property type="expression patterns" value="baseline and differential"/>
</dbReference>
<dbReference type="GO" id="GO:0016020">
    <property type="term" value="C:membrane"/>
    <property type="evidence" value="ECO:0000314"/>
    <property type="project" value="UniProtKB"/>
</dbReference>
<dbReference type="GO" id="GO:0005886">
    <property type="term" value="C:plasma membrane"/>
    <property type="evidence" value="ECO:0000250"/>
    <property type="project" value="UniProtKB"/>
</dbReference>
<dbReference type="GO" id="GO:0008076">
    <property type="term" value="C:voltage-gated potassium channel complex"/>
    <property type="evidence" value="ECO:0000314"/>
    <property type="project" value="UniProtKB"/>
</dbReference>
<dbReference type="GO" id="GO:0015459">
    <property type="term" value="F:potassium channel regulator activity"/>
    <property type="evidence" value="ECO:0000314"/>
    <property type="project" value="UniProtKB"/>
</dbReference>
<dbReference type="GO" id="GO:0008236">
    <property type="term" value="F:serine-type peptidase activity"/>
    <property type="evidence" value="ECO:0007669"/>
    <property type="project" value="InterPro"/>
</dbReference>
<dbReference type="GO" id="GO:0072659">
    <property type="term" value="P:protein localization to plasma membrane"/>
    <property type="evidence" value="ECO:0000250"/>
    <property type="project" value="UniProtKB"/>
</dbReference>
<dbReference type="GO" id="GO:0006508">
    <property type="term" value="P:proteolysis"/>
    <property type="evidence" value="ECO:0007669"/>
    <property type="project" value="InterPro"/>
</dbReference>
<dbReference type="GO" id="GO:1901379">
    <property type="term" value="P:regulation of potassium ion transmembrane transport"/>
    <property type="evidence" value="ECO:0000314"/>
    <property type="project" value="UniProtKB"/>
</dbReference>
<dbReference type="FunFam" id="2.140.10.30:FF:000001">
    <property type="entry name" value="Dipeptidyl peptidase 4"/>
    <property type="match status" value="1"/>
</dbReference>
<dbReference type="FunFam" id="3.40.50.1820:FF:000003">
    <property type="entry name" value="Dipeptidyl peptidase 4"/>
    <property type="match status" value="1"/>
</dbReference>
<dbReference type="Gene3D" id="3.40.50.1820">
    <property type="entry name" value="alpha/beta hydrolase"/>
    <property type="match status" value="1"/>
</dbReference>
<dbReference type="Gene3D" id="2.140.10.30">
    <property type="entry name" value="Dipeptidylpeptidase IV, N-terminal domain"/>
    <property type="match status" value="1"/>
</dbReference>
<dbReference type="InterPro" id="IPR029058">
    <property type="entry name" value="AB_hydrolase_fold"/>
</dbReference>
<dbReference type="InterPro" id="IPR001375">
    <property type="entry name" value="Peptidase_S9_cat"/>
</dbReference>
<dbReference type="InterPro" id="IPR002469">
    <property type="entry name" value="Peptidase_S9B_N"/>
</dbReference>
<dbReference type="InterPro" id="IPR050278">
    <property type="entry name" value="Serine_Prot_S9B/DPPIV"/>
</dbReference>
<dbReference type="PANTHER" id="PTHR11731:SF20">
    <property type="entry name" value="DIPEPTIDYL AMINOPEPTIDASE-LIKE PROTEIN 6"/>
    <property type="match status" value="1"/>
</dbReference>
<dbReference type="PANTHER" id="PTHR11731">
    <property type="entry name" value="PROTEASE FAMILY S9B,C DIPEPTIDYL-PEPTIDASE IV-RELATED"/>
    <property type="match status" value="1"/>
</dbReference>
<dbReference type="Pfam" id="PF00930">
    <property type="entry name" value="DPPIV_N"/>
    <property type="match status" value="1"/>
</dbReference>
<dbReference type="Pfam" id="PF00326">
    <property type="entry name" value="Peptidase_S9"/>
    <property type="match status" value="1"/>
</dbReference>
<dbReference type="SUPFAM" id="SSF53474">
    <property type="entry name" value="alpha/beta-Hydrolases"/>
    <property type="match status" value="1"/>
</dbReference>
<dbReference type="SUPFAM" id="SSF82171">
    <property type="entry name" value="DPP6 N-terminal domain-like"/>
    <property type="match status" value="1"/>
</dbReference>
<accession>P42658</accession>
<sequence length="865" mass="97588">MASLYQRFTGKINTSRSFPAPPEASHLLGGQGPEEDGGAGAKPLGPRAQAAAPRERGGGGGGAGGRPRFQYQARSDGDEEDELVGSNPPQRNWKGIAIALLVILVICSLIVTSVILLTPAEDNSLSQKKKVTVEDLFSEDFKIHDPEAKWISDTEFIYREQKGTVRLWNVETNTSTVLIEGKKIESLRAIRYEISPDREYALFSYNVEPIYQHSYTGYYVLSKIPHGDPQSLDPPEVSNAKLQYAGWGPKGQQLIFIFENNIYYCAHVGKQAIRVVSTGKEGVIYNGLSDWLYEEEILKTHIAHWWSPDGTRLAYAAINDSRVPIMELPTYTGSIYPTVKPYHYPKAGSENPSISLHVIGLNGPTHDLEMMPPDDPRMREYYITMVKWATSTKVAVTWLNRAQNVSILTLCDATTGVCTKKHEDESEAWLHRQNEEPVFSKDGRKFFFIRAIPQGGRGKFYHITVSSSQPNSSNDNIQSITSGDWDVTKILAYDEKGNKIYFLSTEDLPRRRQLYSANTVGNFNRQCLSCDLVENCTYFSASFSHSMDFFLLKCEGPGVPMVTVHNTTDKKKMFDLETNEHVKKAINDRQMPKVEYRDIEIDDYNLPMQILKPATFTDTTHYPLLLVVDGTPGSQSVAEKFEVSWETVMVSSHGAVVVKCDGRGSGFQGTKLLHEVRRRLGLLEEKDQMEAVRTMLKEQYIDRTRVAVFGKDYGGYLSTYILPAKGENQGQTFTCGSALSPITDFKLYASAFSERYLGLHGLDNRAYEMTKVAHRVSALEEQQFLIIHPTADEKIHFQHTAELITQLIRGKANYSLQIYPDESHYFTSSSLKQHLYRSIINFFVECFRIQDKLLTVTAKEDEEED</sequence>
<keyword id="KW-0002">3D-structure</keyword>
<keyword id="KW-0025">Alternative splicing</keyword>
<keyword id="KW-1003">Cell membrane</keyword>
<keyword id="KW-0225">Disease variant</keyword>
<keyword id="KW-1015">Disulfide bond</keyword>
<keyword id="KW-0325">Glycoprotein</keyword>
<keyword id="KW-0991">Intellectual disability</keyword>
<keyword id="KW-0472">Membrane</keyword>
<keyword id="KW-0523">Neurodegeneration</keyword>
<keyword id="KW-1267">Proteomics identification</keyword>
<keyword id="KW-1185">Reference proteome</keyword>
<keyword id="KW-0735">Signal-anchor</keyword>
<keyword id="KW-0812">Transmembrane</keyword>
<keyword id="KW-1133">Transmembrane helix</keyword>